<proteinExistence type="inferred from homology"/>
<organism>
    <name type="scientific">Mannheimia succiniciproducens (strain KCTC 0769BP / MBEL55E)</name>
    <dbReference type="NCBI Taxonomy" id="221988"/>
    <lineage>
        <taxon>Bacteria</taxon>
        <taxon>Pseudomonadati</taxon>
        <taxon>Pseudomonadota</taxon>
        <taxon>Gammaproteobacteria</taxon>
        <taxon>Pasteurellales</taxon>
        <taxon>Pasteurellaceae</taxon>
        <taxon>Basfia</taxon>
    </lineage>
</organism>
<name>SYY_MANSM</name>
<gene>
    <name evidence="1" type="primary">tyrS</name>
    <name type="ordered locus">MS1232</name>
</gene>
<feature type="chain" id="PRO_0000236733" description="Tyrosine--tRNA ligase">
    <location>
        <begin position="1"/>
        <end position="395"/>
    </location>
</feature>
<feature type="domain" description="S4 RNA-binding" evidence="1">
    <location>
        <begin position="334"/>
        <end position="394"/>
    </location>
</feature>
<feature type="short sequence motif" description="'HIGH' region">
    <location>
        <begin position="42"/>
        <end position="51"/>
    </location>
</feature>
<feature type="short sequence motif" description="'KMSKS' region">
    <location>
        <begin position="226"/>
        <end position="230"/>
    </location>
</feature>
<feature type="binding site" evidence="1">
    <location>
        <position position="229"/>
    </location>
    <ligand>
        <name>ATP</name>
        <dbReference type="ChEBI" id="CHEBI:30616"/>
    </ligand>
</feature>
<comment type="function">
    <text evidence="1">Catalyzes the attachment of tyrosine to tRNA(Tyr) in a two-step reaction: tyrosine is first activated by ATP to form Tyr-AMP and then transferred to the acceptor end of tRNA(Tyr).</text>
</comment>
<comment type="catalytic activity">
    <reaction evidence="1">
        <text>tRNA(Tyr) + L-tyrosine + ATP = L-tyrosyl-tRNA(Tyr) + AMP + diphosphate + H(+)</text>
        <dbReference type="Rhea" id="RHEA:10220"/>
        <dbReference type="Rhea" id="RHEA-COMP:9706"/>
        <dbReference type="Rhea" id="RHEA-COMP:9707"/>
        <dbReference type="ChEBI" id="CHEBI:15378"/>
        <dbReference type="ChEBI" id="CHEBI:30616"/>
        <dbReference type="ChEBI" id="CHEBI:33019"/>
        <dbReference type="ChEBI" id="CHEBI:58315"/>
        <dbReference type="ChEBI" id="CHEBI:78442"/>
        <dbReference type="ChEBI" id="CHEBI:78536"/>
        <dbReference type="ChEBI" id="CHEBI:456215"/>
        <dbReference type="EC" id="6.1.1.1"/>
    </reaction>
</comment>
<comment type="subunit">
    <text evidence="1">Homodimer.</text>
</comment>
<comment type="subcellular location">
    <subcellularLocation>
        <location evidence="1">Cytoplasm</location>
    </subcellularLocation>
</comment>
<comment type="similarity">
    <text evidence="1">Belongs to the class-I aminoacyl-tRNA synthetase family. TyrS type 2 subfamily.</text>
</comment>
<evidence type="ECO:0000255" key="1">
    <source>
        <dbReference type="HAMAP-Rule" id="MF_02007"/>
    </source>
</evidence>
<protein>
    <recommendedName>
        <fullName evidence="1">Tyrosine--tRNA ligase</fullName>
        <ecNumber evidence="1">6.1.1.1</ecNumber>
    </recommendedName>
    <alternativeName>
        <fullName evidence="1">Tyrosyl-tRNA synthetase</fullName>
        <shortName evidence="1">TyrRS</shortName>
    </alternativeName>
</protein>
<dbReference type="EC" id="6.1.1.1" evidence="1"/>
<dbReference type="EMBL" id="AE016827">
    <property type="protein sequence ID" value="AAU37839.1"/>
    <property type="molecule type" value="Genomic_DNA"/>
</dbReference>
<dbReference type="RefSeq" id="WP_011200406.1">
    <property type="nucleotide sequence ID" value="NC_006300.1"/>
</dbReference>
<dbReference type="SMR" id="Q65T71"/>
<dbReference type="STRING" id="221988.MS1232"/>
<dbReference type="KEGG" id="msu:MS1232"/>
<dbReference type="eggNOG" id="COG0162">
    <property type="taxonomic scope" value="Bacteria"/>
</dbReference>
<dbReference type="HOGENOM" id="CLU_024003_5_0_6"/>
<dbReference type="OrthoDB" id="9804243at2"/>
<dbReference type="Proteomes" id="UP000000607">
    <property type="component" value="Chromosome"/>
</dbReference>
<dbReference type="GO" id="GO:0005829">
    <property type="term" value="C:cytosol"/>
    <property type="evidence" value="ECO:0007669"/>
    <property type="project" value="TreeGrafter"/>
</dbReference>
<dbReference type="GO" id="GO:0005524">
    <property type="term" value="F:ATP binding"/>
    <property type="evidence" value="ECO:0007669"/>
    <property type="project" value="UniProtKB-UniRule"/>
</dbReference>
<dbReference type="GO" id="GO:0003723">
    <property type="term" value="F:RNA binding"/>
    <property type="evidence" value="ECO:0007669"/>
    <property type="project" value="UniProtKB-KW"/>
</dbReference>
<dbReference type="GO" id="GO:0004831">
    <property type="term" value="F:tyrosine-tRNA ligase activity"/>
    <property type="evidence" value="ECO:0007669"/>
    <property type="project" value="UniProtKB-UniRule"/>
</dbReference>
<dbReference type="GO" id="GO:0006437">
    <property type="term" value="P:tyrosyl-tRNA aminoacylation"/>
    <property type="evidence" value="ECO:0007669"/>
    <property type="project" value="UniProtKB-UniRule"/>
</dbReference>
<dbReference type="CDD" id="cd00165">
    <property type="entry name" value="S4"/>
    <property type="match status" value="1"/>
</dbReference>
<dbReference type="CDD" id="cd00805">
    <property type="entry name" value="TyrRS_core"/>
    <property type="match status" value="1"/>
</dbReference>
<dbReference type="FunFam" id="1.10.240.10:FF:000006">
    <property type="entry name" value="Tyrosine--tRNA ligase"/>
    <property type="match status" value="1"/>
</dbReference>
<dbReference type="FunFam" id="3.10.290.10:FF:000022">
    <property type="entry name" value="Tyrosine--tRNA ligase"/>
    <property type="match status" value="1"/>
</dbReference>
<dbReference type="FunFam" id="3.40.50.620:FF:000061">
    <property type="entry name" value="Tyrosine--tRNA ligase"/>
    <property type="match status" value="1"/>
</dbReference>
<dbReference type="Gene3D" id="3.40.50.620">
    <property type="entry name" value="HUPs"/>
    <property type="match status" value="1"/>
</dbReference>
<dbReference type="Gene3D" id="3.10.290.10">
    <property type="entry name" value="RNA-binding S4 domain"/>
    <property type="match status" value="1"/>
</dbReference>
<dbReference type="Gene3D" id="1.10.240.10">
    <property type="entry name" value="Tyrosyl-Transfer RNA Synthetase"/>
    <property type="match status" value="1"/>
</dbReference>
<dbReference type="HAMAP" id="MF_02007">
    <property type="entry name" value="Tyr_tRNA_synth_type2"/>
    <property type="match status" value="1"/>
</dbReference>
<dbReference type="InterPro" id="IPR001412">
    <property type="entry name" value="aa-tRNA-synth_I_CS"/>
</dbReference>
<dbReference type="InterPro" id="IPR002305">
    <property type="entry name" value="aa-tRNA-synth_Ic"/>
</dbReference>
<dbReference type="InterPro" id="IPR014729">
    <property type="entry name" value="Rossmann-like_a/b/a_fold"/>
</dbReference>
<dbReference type="InterPro" id="IPR002942">
    <property type="entry name" value="S4_RNA-bd"/>
</dbReference>
<dbReference type="InterPro" id="IPR036986">
    <property type="entry name" value="S4_RNA-bd_sf"/>
</dbReference>
<dbReference type="InterPro" id="IPR002307">
    <property type="entry name" value="Tyr-tRNA-ligase"/>
</dbReference>
<dbReference type="InterPro" id="IPR024088">
    <property type="entry name" value="Tyr-tRNA-ligase_bac-type"/>
</dbReference>
<dbReference type="InterPro" id="IPR024108">
    <property type="entry name" value="Tyr-tRNA-ligase_bac_2"/>
</dbReference>
<dbReference type="NCBIfam" id="TIGR00234">
    <property type="entry name" value="tyrS"/>
    <property type="match status" value="1"/>
</dbReference>
<dbReference type="PANTHER" id="PTHR11766:SF1">
    <property type="entry name" value="TYROSINE--TRNA LIGASE"/>
    <property type="match status" value="1"/>
</dbReference>
<dbReference type="PANTHER" id="PTHR11766">
    <property type="entry name" value="TYROSYL-TRNA SYNTHETASE"/>
    <property type="match status" value="1"/>
</dbReference>
<dbReference type="Pfam" id="PF01479">
    <property type="entry name" value="S4"/>
    <property type="match status" value="1"/>
</dbReference>
<dbReference type="Pfam" id="PF00579">
    <property type="entry name" value="tRNA-synt_1b"/>
    <property type="match status" value="1"/>
</dbReference>
<dbReference type="PRINTS" id="PR01040">
    <property type="entry name" value="TRNASYNTHTYR"/>
</dbReference>
<dbReference type="SMART" id="SM00363">
    <property type="entry name" value="S4"/>
    <property type="match status" value="1"/>
</dbReference>
<dbReference type="SUPFAM" id="SSF55174">
    <property type="entry name" value="Alpha-L RNA-binding motif"/>
    <property type="match status" value="1"/>
</dbReference>
<dbReference type="SUPFAM" id="SSF52374">
    <property type="entry name" value="Nucleotidylyl transferase"/>
    <property type="match status" value="1"/>
</dbReference>
<dbReference type="PROSITE" id="PS00178">
    <property type="entry name" value="AA_TRNA_LIGASE_I"/>
    <property type="match status" value="1"/>
</dbReference>
<dbReference type="PROSITE" id="PS50889">
    <property type="entry name" value="S4"/>
    <property type="match status" value="1"/>
</dbReference>
<keyword id="KW-0030">Aminoacyl-tRNA synthetase</keyword>
<keyword id="KW-0067">ATP-binding</keyword>
<keyword id="KW-0963">Cytoplasm</keyword>
<keyword id="KW-0436">Ligase</keyword>
<keyword id="KW-0547">Nucleotide-binding</keyword>
<keyword id="KW-0648">Protein biosynthesis</keyword>
<keyword id="KW-0694">RNA-binding</keyword>
<accession>Q65T71</accession>
<reference key="1">
    <citation type="journal article" date="2004" name="Nat. Biotechnol.">
        <title>The genome sequence of the capnophilic rumen bacterium Mannheimia succiniciproducens.</title>
        <authorList>
            <person name="Hong S.H."/>
            <person name="Kim J.S."/>
            <person name="Lee S.Y."/>
            <person name="In Y.H."/>
            <person name="Choi S.S."/>
            <person name="Rih J.-K."/>
            <person name="Kim C.H."/>
            <person name="Jeong H."/>
            <person name="Hur C.G."/>
            <person name="Kim J.J."/>
        </authorList>
    </citation>
    <scope>NUCLEOTIDE SEQUENCE [LARGE SCALE GENOMIC DNA]</scope>
    <source>
        <strain>KCTC 0769BP / MBEL55E</strain>
    </source>
</reference>
<sequence>MSDINVVLAELKRGVDEVLSEADLIEKLKENRPLKIKLGADPTAPDIHLGHTVVLNKLRQFQNFGHEVIFLIGDFTGMVGDPSGKNKTRPPLSREDVLRNAETYKQQIYKILDPQKTRIVFNSDWLGKLGTEGMIRLASNYTVARMLERDDFKKRFTEKQPIAIHEFIYPLLQGHDSVALEADVELGGTDQKFNLLVGRELQKSAGQKPQVAMTLPLLVGLDGEKKMSKSLGNYIGVTDAPNDMFGKIMSISDDLMWDWYDLLSFRPLTEIAQFKEEVKNGRNPRDVKILLAKEIIARFHSEADADTAEQEFINRFQKGAMPDEMPEFTFEGEIGLANLLKEAGLVASTSEANRMVQQDGVKIDGEKVEDAKTTISASTHVYQVGKRKFARVTVR</sequence>